<comment type="function">
    <text evidence="1">May inhibit phosphatase activity of protein phosphatase 1 (PP1) complexes. May positively regulate cell proliferation (By similarity).</text>
</comment>
<comment type="subcellular location">
    <subcellularLocation>
        <location evidence="1">Nucleus</location>
        <location evidence="1">Nucleolus</location>
    </subcellularLocation>
</comment>
<sequence>MFLVNAPPLASFQTKWAPFGQTTACRIPVSFSESEEDISRATISTQVQGIISTLQSDESSLEVTVEHEGIMQKTRKGDFNIERGLKTNAAVLKGHTRESATLVVPAEFRDNKDDHSEFGPLMLESDSDDSVDRDIEEAIQEYLKKKDTGEASNEGLNTTSSTSVEHGVLLNDAQNFAAANTCPVSMVTTSDICNSFRLKEQQRSSSPVSVSSDDSFEQSIKAEIEQFLNDKKQQKSKSKISSPPKVPCIETQSKPKLKTSKTSEKQNSKQAGSELLRKHASDSKLLRPSPETTKIQPKACVLKQNTKTSSPSPKSTPIVKEEPSDSSSDDGIEEAIQLYQLEKRRQGITPTVTPEKVKSPTSANSLTHFESRKRKSLNNKLAASQDISNCQPLLSKRPVLSEEDSFSKREIGAPTTCRAETAAELMCAEAILDISKTILPSQPQSTYVIPTEPPPPPPEPQCDSDSLVDSDDSIEQEIRTFLARKAQVEGAGISPVKLETTIETSPELGSQSSKLSLTHKRKAKAMQSDLMRKTLPLDKLGSNVELNQYPQPDERLQSSGKFAAKLSAPSEIHMGAGESIVIPEVSTALNRGRGRSHGLTRSYSSGDKSSSLDSDEDLDTAIKDLLKSKRKYKKRPKDGKSQCKKRVRFDETISKPVEISEDSKQPPKDPPFIKSCLLNSSTAKENSLEKSKKRREEKAVERNIPSCSSSPQGNKDGQPMPACASNEPNSKTRALDDAHESSSVDSDDGIEQEIRKFLAERAKVSSALTAAQNEAVSDSNIEKNTQTLKQEQAVLLNPVPETALQPEPCANISTAATAQASVVQLLALHSGKQSLLPVRLFNTRPVEVRTGMSPQSTPNCFIIKKECLVEQNSIIKPIEQCLPTAPGRVITQANLNSPQNFPVAGNFVAGLKYVSGTEKQLLLNVGHTGPSKLATEICKSMVHNSRLANCPPLDRKGPALERSKELPAISIIPKSPLVRSGLYLLTTKVCKENSPSLCLPINTTAYKTGINLMSIQYCQVNTQKPPCVGELSVNQPKSAESRVSVPGHATNPPLFVTRSREFKAAREGVEREGRTNLNKAASHDLVADSVKKVKEIKNSQESKNV</sequence>
<feature type="chain" id="PRO_0000309220" description="Protein phosphatase 1 regulatory subunit 26">
    <location>
        <begin position="1"/>
        <end position="1105"/>
    </location>
</feature>
<feature type="region of interest" description="Disordered" evidence="2">
    <location>
        <begin position="228"/>
        <end position="382"/>
    </location>
</feature>
<feature type="region of interest" description="Disordered" evidence="2">
    <location>
        <begin position="444"/>
        <end position="468"/>
    </location>
</feature>
<feature type="region of interest" description="Disordered" evidence="2">
    <location>
        <begin position="504"/>
        <end position="526"/>
    </location>
</feature>
<feature type="region of interest" description="Disordered" evidence="2">
    <location>
        <begin position="589"/>
        <end position="748"/>
    </location>
</feature>
<feature type="compositionally biased region" description="Basic and acidic residues" evidence="2">
    <location>
        <begin position="275"/>
        <end position="285"/>
    </location>
</feature>
<feature type="compositionally biased region" description="Low complexity" evidence="2">
    <location>
        <begin position="306"/>
        <end position="317"/>
    </location>
</feature>
<feature type="compositionally biased region" description="Polar residues" evidence="2">
    <location>
        <begin position="359"/>
        <end position="368"/>
    </location>
</feature>
<feature type="compositionally biased region" description="Pro residues" evidence="2">
    <location>
        <begin position="451"/>
        <end position="460"/>
    </location>
</feature>
<feature type="compositionally biased region" description="Polar residues" evidence="2">
    <location>
        <begin position="504"/>
        <end position="516"/>
    </location>
</feature>
<feature type="compositionally biased region" description="Low complexity" evidence="2">
    <location>
        <begin position="602"/>
        <end position="612"/>
    </location>
</feature>
<feature type="compositionally biased region" description="Basic residues" evidence="2">
    <location>
        <begin position="628"/>
        <end position="647"/>
    </location>
</feature>
<feature type="compositionally biased region" description="Basic and acidic residues" evidence="2">
    <location>
        <begin position="686"/>
        <end position="701"/>
    </location>
</feature>
<feature type="compositionally biased region" description="Polar residues" evidence="2">
    <location>
        <begin position="705"/>
        <end position="715"/>
    </location>
</feature>
<feature type="compositionally biased region" description="Basic and acidic residues" evidence="2">
    <location>
        <begin position="733"/>
        <end position="742"/>
    </location>
</feature>
<accession>Q6NU19</accession>
<keyword id="KW-0539">Nucleus</keyword>
<keyword id="KW-0650">Protein phosphatase inhibitor</keyword>
<keyword id="KW-1185">Reference proteome</keyword>
<reference key="1">
    <citation type="submission" date="2004-04" db="EMBL/GenBank/DDBJ databases">
        <authorList>
            <consortium name="NIH - Xenopus Gene Collection (XGC) project"/>
        </authorList>
    </citation>
    <scope>NUCLEOTIDE SEQUENCE [LARGE SCALE MRNA]</scope>
    <source>
        <tissue>Embryo</tissue>
    </source>
</reference>
<gene>
    <name type="primary">ppp1r26</name>
</gene>
<protein>
    <recommendedName>
        <fullName>Protein phosphatase 1 regulatory subunit 26</fullName>
    </recommendedName>
</protein>
<organism>
    <name type="scientific">Xenopus laevis</name>
    <name type="common">African clawed frog</name>
    <dbReference type="NCBI Taxonomy" id="8355"/>
    <lineage>
        <taxon>Eukaryota</taxon>
        <taxon>Metazoa</taxon>
        <taxon>Chordata</taxon>
        <taxon>Craniata</taxon>
        <taxon>Vertebrata</taxon>
        <taxon>Euteleostomi</taxon>
        <taxon>Amphibia</taxon>
        <taxon>Batrachia</taxon>
        <taxon>Anura</taxon>
        <taxon>Pipoidea</taxon>
        <taxon>Pipidae</taxon>
        <taxon>Xenopodinae</taxon>
        <taxon>Xenopus</taxon>
        <taxon>Xenopus</taxon>
    </lineage>
</organism>
<dbReference type="EMBL" id="BC068783">
    <property type="protein sequence ID" value="AAH68783.1"/>
    <property type="molecule type" value="mRNA"/>
</dbReference>
<dbReference type="RefSeq" id="NP_001084573.1">
    <property type="nucleotide sequence ID" value="NM_001091104.1"/>
</dbReference>
<dbReference type="SMR" id="Q6NU19"/>
<dbReference type="DNASU" id="414525"/>
<dbReference type="GeneID" id="414525"/>
<dbReference type="KEGG" id="xla:414525"/>
<dbReference type="AGR" id="Xenbase:XB-GENE-5922987"/>
<dbReference type="CTD" id="414525"/>
<dbReference type="Xenbase" id="XB-GENE-5922987">
    <property type="gene designation" value="ppp1r26.L"/>
</dbReference>
<dbReference type="OrthoDB" id="9939953at2759"/>
<dbReference type="Proteomes" id="UP000186698">
    <property type="component" value="Chromosome 8L"/>
</dbReference>
<dbReference type="Bgee" id="414525">
    <property type="expression patterns" value="Expressed in testis and 19 other cell types or tissues"/>
</dbReference>
<dbReference type="GO" id="GO:0005730">
    <property type="term" value="C:nucleolus"/>
    <property type="evidence" value="ECO:0007669"/>
    <property type="project" value="UniProtKB-SubCell"/>
</dbReference>
<dbReference type="GO" id="GO:0004864">
    <property type="term" value="F:protein phosphatase inhibitor activity"/>
    <property type="evidence" value="ECO:0007669"/>
    <property type="project" value="UniProtKB-KW"/>
</dbReference>
<dbReference type="InterPro" id="IPR026130">
    <property type="entry name" value="PPP1R26"/>
</dbReference>
<dbReference type="InterPro" id="IPR031474">
    <property type="entry name" value="PPP1R26_N"/>
</dbReference>
<dbReference type="PANTHER" id="PTHR15724">
    <property type="entry name" value="PROTEIN PHOSPHATASE 1 REGULATORY SUBUNIT 26"/>
    <property type="match status" value="1"/>
</dbReference>
<dbReference type="PANTHER" id="PTHR15724:SF0">
    <property type="entry name" value="PROTEIN PHOSPHATASE 1 REGULATORY SUBUNIT 26"/>
    <property type="match status" value="1"/>
</dbReference>
<dbReference type="Pfam" id="PF15740">
    <property type="entry name" value="PPP1R26_N"/>
    <property type="match status" value="2"/>
</dbReference>
<name>PPR26_XENLA</name>
<evidence type="ECO:0000250" key="1"/>
<evidence type="ECO:0000256" key="2">
    <source>
        <dbReference type="SAM" id="MobiDB-lite"/>
    </source>
</evidence>
<proteinExistence type="evidence at transcript level"/>